<sequence length="152" mass="17485">MSVDLSSYRDQHFKGSRSEQERLLRLSTTLYVGNMSFYTTEEQIYELFSKCGDVKKVIMGLDRFHKTPCGFCFVEYYTREDAENAIRYVNGTKLDDRIIRTDWDAGFVEGRQFGRGKSGGQVRDEYRTDYDSGRGGYGKLMAQRVVPPPAVV</sequence>
<reference key="1">
    <citation type="submission" date="2008-03" db="EMBL/GenBank/DDBJ databases">
        <title>Annotation of Ixodes scapularis.</title>
        <authorList>
            <consortium name="Ixodes scapularis Genome Project Consortium"/>
            <person name="Caler E."/>
            <person name="Hannick L.I."/>
            <person name="Bidwell S."/>
            <person name="Joardar V."/>
            <person name="Thiagarajan M."/>
            <person name="Amedeo P."/>
            <person name="Galinsky K.J."/>
            <person name="Schobel S."/>
            <person name="Inman J."/>
            <person name="Hostetler J."/>
            <person name="Miller J."/>
            <person name="Hammond M."/>
            <person name="Megy K."/>
            <person name="Lawson D."/>
            <person name="Kodira C."/>
            <person name="Sutton G."/>
            <person name="Meyer J."/>
            <person name="Hill C.A."/>
            <person name="Birren B."/>
            <person name="Nene V."/>
            <person name="Collins F."/>
            <person name="Alarcon-Chaidez F."/>
            <person name="Wikel S."/>
            <person name="Strausberg R."/>
        </authorList>
    </citation>
    <scope>NUCLEOTIDE SEQUENCE [LARGE SCALE GENOMIC DNA]</scope>
    <source>
        <strain>Wikel</strain>
    </source>
</reference>
<proteinExistence type="inferred from homology"/>
<protein>
    <recommendedName>
        <fullName>Nuclear cap-binding protein subunit 2</fullName>
    </recommendedName>
    <alternativeName>
        <fullName>20 kDa nuclear cap-binding protein</fullName>
    </alternativeName>
    <alternativeName>
        <fullName>NCBP 20 kDa subunit</fullName>
        <shortName>CBP20</shortName>
    </alternativeName>
</protein>
<dbReference type="EMBL" id="DS656359">
    <property type="protein sequence ID" value="EEC02799.1"/>
    <property type="molecule type" value="Genomic_DNA"/>
</dbReference>
<dbReference type="SMR" id="B7P877"/>
<dbReference type="FunCoup" id="B7P877">
    <property type="interactions" value="1626"/>
</dbReference>
<dbReference type="STRING" id="6945.B7P877"/>
<dbReference type="PaxDb" id="6945-B7P877"/>
<dbReference type="EnsemblMetazoa" id="ISCI017479-RA">
    <property type="protein sequence ID" value="ISCI017479-PA"/>
    <property type="gene ID" value="ISCI017479"/>
</dbReference>
<dbReference type="EnsemblMetazoa" id="ISCW017479-RA">
    <property type="protein sequence ID" value="ISCW017479-PA"/>
    <property type="gene ID" value="ISCW017479"/>
</dbReference>
<dbReference type="EnsemblMetazoa" id="XM_002401526.5">
    <property type="protein sequence ID" value="XP_002401570.1"/>
    <property type="gene ID" value="LOC8026041"/>
</dbReference>
<dbReference type="GeneID" id="8026041"/>
<dbReference type="KEGG" id="isc:8026041"/>
<dbReference type="CTD" id="42166"/>
<dbReference type="VEuPathDB" id="VectorBase:ISCI017479"/>
<dbReference type="VEuPathDB" id="VectorBase:ISCP_013901"/>
<dbReference type="VEuPathDB" id="VectorBase:ISCW017479"/>
<dbReference type="HOGENOM" id="CLU_070952_2_0_1"/>
<dbReference type="InParanoid" id="B7P877"/>
<dbReference type="OMA" id="DIRRIIM"/>
<dbReference type="OrthoDB" id="201398at2759"/>
<dbReference type="PhylomeDB" id="B7P877"/>
<dbReference type="Proteomes" id="UP000001555">
    <property type="component" value="Unassembled WGS sequence"/>
</dbReference>
<dbReference type="GO" id="GO:0005846">
    <property type="term" value="C:nuclear cap binding complex"/>
    <property type="evidence" value="ECO:0000318"/>
    <property type="project" value="GO_Central"/>
</dbReference>
<dbReference type="GO" id="GO:0005634">
    <property type="term" value="C:nucleus"/>
    <property type="evidence" value="ECO:0007669"/>
    <property type="project" value="UniProtKB-SubCell"/>
</dbReference>
<dbReference type="GO" id="GO:0000339">
    <property type="term" value="F:RNA cap binding"/>
    <property type="evidence" value="ECO:0000318"/>
    <property type="project" value="GO_Central"/>
</dbReference>
<dbReference type="GO" id="GO:0045292">
    <property type="term" value="P:mRNA cis splicing, via spliceosome"/>
    <property type="evidence" value="ECO:0007669"/>
    <property type="project" value="InterPro"/>
</dbReference>
<dbReference type="GO" id="GO:0000398">
    <property type="term" value="P:mRNA splicing, via spliceosome"/>
    <property type="evidence" value="ECO:0000318"/>
    <property type="project" value="GO_Central"/>
</dbReference>
<dbReference type="GO" id="GO:0031047">
    <property type="term" value="P:regulatory ncRNA-mediated gene silencing"/>
    <property type="evidence" value="ECO:0007669"/>
    <property type="project" value="UniProtKB-KW"/>
</dbReference>
<dbReference type="CDD" id="cd12240">
    <property type="entry name" value="RRM_NCBP2"/>
    <property type="match status" value="1"/>
</dbReference>
<dbReference type="FunFam" id="3.30.70.330:FF:000128">
    <property type="entry name" value="Nuclear cap-binding protein subunit 2"/>
    <property type="match status" value="1"/>
</dbReference>
<dbReference type="Gene3D" id="3.30.70.330">
    <property type="match status" value="1"/>
</dbReference>
<dbReference type="InterPro" id="IPR027157">
    <property type="entry name" value="NCBP2"/>
</dbReference>
<dbReference type="InterPro" id="IPR034148">
    <property type="entry name" value="NCBP2_RRM"/>
</dbReference>
<dbReference type="InterPro" id="IPR012677">
    <property type="entry name" value="Nucleotide-bd_a/b_plait_sf"/>
</dbReference>
<dbReference type="InterPro" id="IPR035979">
    <property type="entry name" value="RBD_domain_sf"/>
</dbReference>
<dbReference type="InterPro" id="IPR000504">
    <property type="entry name" value="RRM_dom"/>
</dbReference>
<dbReference type="PANTHER" id="PTHR18847">
    <property type="entry name" value="20 KD NUCLEAR CAP BINDING PROTEIN"/>
    <property type="match status" value="1"/>
</dbReference>
<dbReference type="PANTHER" id="PTHR18847:SF0">
    <property type="entry name" value="NUCLEAR CAP-BINDING PROTEIN SUBUNIT 2"/>
    <property type="match status" value="1"/>
</dbReference>
<dbReference type="Pfam" id="PF00076">
    <property type="entry name" value="RRM_1"/>
    <property type="match status" value="1"/>
</dbReference>
<dbReference type="SMART" id="SM00360">
    <property type="entry name" value="RRM"/>
    <property type="match status" value="1"/>
</dbReference>
<dbReference type="SUPFAM" id="SSF54928">
    <property type="entry name" value="RNA-binding domain, RBD"/>
    <property type="match status" value="1"/>
</dbReference>
<dbReference type="PROSITE" id="PS50102">
    <property type="entry name" value="RRM"/>
    <property type="match status" value="1"/>
</dbReference>
<gene>
    <name type="primary">Cbp20</name>
    <name type="ORF">ISCW017479</name>
</gene>
<comment type="function">
    <text evidence="1">Component of the cap-binding complex (CBC), which binds co-transcriptionally to the 5' cap of pre-mRNAs and is involved in various processes such as pre-mRNA splicing and RNA-mediated gene silencing (RNAi). The CBC complex is involved in miRNA-mediated RNA interference and is required for primary microRNAs (miRNAs) processing. Also involved in innate immunity via the short interfering RNAs (siRNAs) processing machinery by restricting the viral RNA production. In the CBC complex, Cbp20 recognizes and binds capped RNAs (m7GpppG-capped RNA) but requires Cbp80 to stabilize the movement of its N-terminal loop and lock the CBC into a high affinity cap-binding state with the cap structure (By similarity).</text>
</comment>
<comment type="subunit">
    <text evidence="1">Component of the nuclear cap-binding complex (CBC), a heterodimer composed of Cbp80 and Cbp20 that interacts with m7GpppG-capped RNA.</text>
</comment>
<comment type="subcellular location">
    <subcellularLocation>
        <location evidence="1">Nucleus</location>
    </subcellularLocation>
</comment>
<comment type="similarity">
    <text evidence="3">Belongs to the RRM NCBP2 family.</text>
</comment>
<keyword id="KW-0507">mRNA processing</keyword>
<keyword id="KW-0508">mRNA splicing</keyword>
<keyword id="KW-0539">Nucleus</keyword>
<keyword id="KW-1185">Reference proteome</keyword>
<keyword id="KW-0694">RNA-binding</keyword>
<keyword id="KW-0943">RNA-mediated gene silencing</keyword>
<organism>
    <name type="scientific">Ixodes scapularis</name>
    <name type="common">Black-legged tick</name>
    <name type="synonym">Deer tick</name>
    <dbReference type="NCBI Taxonomy" id="6945"/>
    <lineage>
        <taxon>Eukaryota</taxon>
        <taxon>Metazoa</taxon>
        <taxon>Ecdysozoa</taxon>
        <taxon>Arthropoda</taxon>
        <taxon>Chelicerata</taxon>
        <taxon>Arachnida</taxon>
        <taxon>Acari</taxon>
        <taxon>Parasitiformes</taxon>
        <taxon>Ixodida</taxon>
        <taxon>Ixodoidea</taxon>
        <taxon>Ixodidae</taxon>
        <taxon>Ixodinae</taxon>
        <taxon>Ixodes</taxon>
    </lineage>
</organism>
<evidence type="ECO:0000250" key="1"/>
<evidence type="ECO:0000255" key="2">
    <source>
        <dbReference type="PROSITE-ProRule" id="PRU00176"/>
    </source>
</evidence>
<evidence type="ECO:0000305" key="3"/>
<accession>B7P877</accession>
<name>NCBP2_IXOSC</name>
<feature type="chain" id="PRO_0000385262" description="Nuclear cap-binding protein subunit 2">
    <location>
        <begin position="1"/>
        <end position="152"/>
    </location>
</feature>
<feature type="domain" description="RRM" evidence="2">
    <location>
        <begin position="28"/>
        <end position="106"/>
    </location>
</feature>
<feature type="binding site" evidence="1">
    <location>
        <position position="8"/>
    </location>
    <ligand>
        <name>mRNA</name>
        <dbReference type="ChEBI" id="CHEBI:33699"/>
    </ligand>
    <ligandPart>
        <name>mRNA cap</name>
    </ligandPart>
</feature>
<feature type="binding site" evidence="1">
    <location>
        <position position="31"/>
    </location>
    <ligand>
        <name>mRNA</name>
        <dbReference type="ChEBI" id="CHEBI:33699"/>
    </ligand>
    <ligandPart>
        <name>mRNA cap</name>
    </ligandPart>
</feature>
<feature type="binding site" evidence="1">
    <location>
        <begin position="100"/>
        <end position="104"/>
    </location>
    <ligand>
        <name>mRNA</name>
        <dbReference type="ChEBI" id="CHEBI:33699"/>
    </ligand>
    <ligandPart>
        <name>mRNA cap</name>
    </ligandPart>
</feature>
<feature type="binding site" evidence="1">
    <location>
        <begin position="111"/>
        <end position="115"/>
    </location>
    <ligand>
        <name>mRNA</name>
        <dbReference type="ChEBI" id="CHEBI:33699"/>
    </ligand>
    <ligandPart>
        <name>mRNA cap</name>
    </ligandPart>
</feature>
<feature type="binding site" evidence="1">
    <location>
        <begin position="121"/>
        <end position="122"/>
    </location>
    <ligand>
        <name>mRNA</name>
        <dbReference type="ChEBI" id="CHEBI:33699"/>
    </ligand>
    <ligandPart>
        <name>mRNA cap</name>
    </ligandPart>
</feature>